<gene>
    <name evidence="1" type="primary">accA</name>
    <name type="ordered locus">ECP_0193</name>
</gene>
<evidence type="ECO:0000255" key="1">
    <source>
        <dbReference type="HAMAP-Rule" id="MF_00823"/>
    </source>
</evidence>
<evidence type="ECO:0000255" key="2">
    <source>
        <dbReference type="PROSITE-ProRule" id="PRU01137"/>
    </source>
</evidence>
<feature type="chain" id="PRO_1000062614" description="Acetyl-coenzyme A carboxylase carboxyl transferase subunit alpha">
    <location>
        <begin position="1"/>
        <end position="319"/>
    </location>
</feature>
<feature type="domain" description="CoA carboxyltransferase C-terminal" evidence="2">
    <location>
        <begin position="35"/>
        <end position="296"/>
    </location>
</feature>
<proteinExistence type="inferred from homology"/>
<keyword id="KW-0067">ATP-binding</keyword>
<keyword id="KW-0963">Cytoplasm</keyword>
<keyword id="KW-0275">Fatty acid biosynthesis</keyword>
<keyword id="KW-0276">Fatty acid metabolism</keyword>
<keyword id="KW-0444">Lipid biosynthesis</keyword>
<keyword id="KW-0443">Lipid metabolism</keyword>
<keyword id="KW-0547">Nucleotide-binding</keyword>
<keyword id="KW-0808">Transferase</keyword>
<comment type="function">
    <text evidence="1">Component of the acetyl coenzyme A carboxylase (ACC) complex. First, biotin carboxylase catalyzes the carboxylation of biotin on its carrier protein (BCCP) and then the CO(2) group is transferred by the carboxyltransferase to acetyl-CoA to form malonyl-CoA.</text>
</comment>
<comment type="catalytic activity">
    <reaction evidence="1">
        <text>N(6)-carboxybiotinyl-L-lysyl-[protein] + acetyl-CoA = N(6)-biotinyl-L-lysyl-[protein] + malonyl-CoA</text>
        <dbReference type="Rhea" id="RHEA:54728"/>
        <dbReference type="Rhea" id="RHEA-COMP:10505"/>
        <dbReference type="Rhea" id="RHEA-COMP:10506"/>
        <dbReference type="ChEBI" id="CHEBI:57288"/>
        <dbReference type="ChEBI" id="CHEBI:57384"/>
        <dbReference type="ChEBI" id="CHEBI:83144"/>
        <dbReference type="ChEBI" id="CHEBI:83145"/>
        <dbReference type="EC" id="2.1.3.15"/>
    </reaction>
</comment>
<comment type="pathway">
    <text evidence="1">Lipid metabolism; malonyl-CoA biosynthesis; malonyl-CoA from acetyl-CoA: step 1/1.</text>
</comment>
<comment type="subunit">
    <text evidence="1">Acetyl-CoA carboxylase is a heterohexamer composed of biotin carboxyl carrier protein (AccB), biotin carboxylase (AccC) and two subunits each of ACCase subunit alpha (AccA) and ACCase subunit beta (AccD).</text>
</comment>
<comment type="subcellular location">
    <subcellularLocation>
        <location evidence="1">Cytoplasm</location>
    </subcellularLocation>
</comment>
<comment type="similarity">
    <text evidence="1">Belongs to the AccA family.</text>
</comment>
<reference key="1">
    <citation type="journal article" date="2006" name="Mol. Microbiol.">
        <title>Role of pathogenicity island-associated integrases in the genome plasticity of uropathogenic Escherichia coli strain 536.</title>
        <authorList>
            <person name="Hochhut B."/>
            <person name="Wilde C."/>
            <person name="Balling G."/>
            <person name="Middendorf B."/>
            <person name="Dobrindt U."/>
            <person name="Brzuszkiewicz E."/>
            <person name="Gottschalk G."/>
            <person name="Carniel E."/>
            <person name="Hacker J."/>
        </authorList>
    </citation>
    <scope>NUCLEOTIDE SEQUENCE [LARGE SCALE GENOMIC DNA]</scope>
    <source>
        <strain>536 / UPEC</strain>
    </source>
</reference>
<name>ACCA_ECOL5</name>
<sequence>MSLNFLDFEQPIAELEAKIDSLTAVSRQDEKLDINIDEEVHRLREKSVELTRKIFADLGAWQIAQLARHPQRPYTLDYVRLAFDEFDELAGDRAYADDKAIVGGIARLDGRPVMIIGHQKGRETKEKIRRNFGMPAPEGYRKALRLMQMAERFKMPIITFIDTPGAYPGVGAEERGQSEAIARNLREMSRLGVPVVCTVIGEGGSGGALAIGVGDKVNMLQYSTYSVISPEGCASILWKSADKAPLAAEAMGIIAPRLKELKLIDSIIPEPLGGAHRNPEAMAASLKAQLLADLADLDVLSTEDLKNRRYQRLMSYGYA</sequence>
<organism>
    <name type="scientific">Escherichia coli O6:K15:H31 (strain 536 / UPEC)</name>
    <dbReference type="NCBI Taxonomy" id="362663"/>
    <lineage>
        <taxon>Bacteria</taxon>
        <taxon>Pseudomonadati</taxon>
        <taxon>Pseudomonadota</taxon>
        <taxon>Gammaproteobacteria</taxon>
        <taxon>Enterobacterales</taxon>
        <taxon>Enterobacteriaceae</taxon>
        <taxon>Escherichia</taxon>
    </lineage>
</organism>
<protein>
    <recommendedName>
        <fullName evidence="1">Acetyl-coenzyme A carboxylase carboxyl transferase subunit alpha</fullName>
        <shortName evidence="1">ACCase subunit alpha</shortName>
        <shortName evidence="1">Acetyl-CoA carboxylase carboxyltransferase subunit alpha</shortName>
        <ecNumber evidence="1">2.1.3.15</ecNumber>
    </recommendedName>
</protein>
<accession>Q0TLE8</accession>
<dbReference type="EC" id="2.1.3.15" evidence="1"/>
<dbReference type="EMBL" id="CP000247">
    <property type="protein sequence ID" value="ABG68233.1"/>
    <property type="molecule type" value="Genomic_DNA"/>
</dbReference>
<dbReference type="RefSeq" id="WP_000055741.1">
    <property type="nucleotide sequence ID" value="NC_008253.1"/>
</dbReference>
<dbReference type="SMR" id="Q0TLE8"/>
<dbReference type="GeneID" id="86945115"/>
<dbReference type="KEGG" id="ecp:ECP_0193"/>
<dbReference type="HOGENOM" id="CLU_015486_0_2_6"/>
<dbReference type="UniPathway" id="UPA00655">
    <property type="reaction ID" value="UER00711"/>
</dbReference>
<dbReference type="Proteomes" id="UP000009182">
    <property type="component" value="Chromosome"/>
</dbReference>
<dbReference type="GO" id="GO:0009317">
    <property type="term" value="C:acetyl-CoA carboxylase complex"/>
    <property type="evidence" value="ECO:0007669"/>
    <property type="project" value="InterPro"/>
</dbReference>
<dbReference type="GO" id="GO:0003989">
    <property type="term" value="F:acetyl-CoA carboxylase activity"/>
    <property type="evidence" value="ECO:0007669"/>
    <property type="project" value="InterPro"/>
</dbReference>
<dbReference type="GO" id="GO:0005524">
    <property type="term" value="F:ATP binding"/>
    <property type="evidence" value="ECO:0007669"/>
    <property type="project" value="UniProtKB-KW"/>
</dbReference>
<dbReference type="GO" id="GO:0016743">
    <property type="term" value="F:carboxyl- or carbamoyltransferase activity"/>
    <property type="evidence" value="ECO:0007669"/>
    <property type="project" value="UniProtKB-UniRule"/>
</dbReference>
<dbReference type="GO" id="GO:0006633">
    <property type="term" value="P:fatty acid biosynthetic process"/>
    <property type="evidence" value="ECO:0007669"/>
    <property type="project" value="UniProtKB-KW"/>
</dbReference>
<dbReference type="GO" id="GO:2001295">
    <property type="term" value="P:malonyl-CoA biosynthetic process"/>
    <property type="evidence" value="ECO:0007669"/>
    <property type="project" value="UniProtKB-UniRule"/>
</dbReference>
<dbReference type="FunFam" id="3.90.226.10:FF:000008">
    <property type="entry name" value="Acetyl-coenzyme A carboxylase carboxyl transferase subunit alpha"/>
    <property type="match status" value="1"/>
</dbReference>
<dbReference type="Gene3D" id="3.90.226.10">
    <property type="entry name" value="2-enoyl-CoA Hydratase, Chain A, domain 1"/>
    <property type="match status" value="1"/>
</dbReference>
<dbReference type="HAMAP" id="MF_00823">
    <property type="entry name" value="AcetylCoA_CT_alpha"/>
    <property type="match status" value="1"/>
</dbReference>
<dbReference type="InterPro" id="IPR001095">
    <property type="entry name" value="Acetyl_CoA_COase_a_su"/>
</dbReference>
<dbReference type="InterPro" id="IPR029045">
    <property type="entry name" value="ClpP/crotonase-like_dom_sf"/>
</dbReference>
<dbReference type="InterPro" id="IPR011763">
    <property type="entry name" value="COA_CT_C"/>
</dbReference>
<dbReference type="NCBIfam" id="TIGR00513">
    <property type="entry name" value="accA"/>
    <property type="match status" value="1"/>
</dbReference>
<dbReference type="NCBIfam" id="NF041504">
    <property type="entry name" value="AccA_sub"/>
    <property type="match status" value="1"/>
</dbReference>
<dbReference type="NCBIfam" id="NF004344">
    <property type="entry name" value="PRK05724.1"/>
    <property type="match status" value="1"/>
</dbReference>
<dbReference type="PANTHER" id="PTHR42853">
    <property type="entry name" value="ACETYL-COENZYME A CARBOXYLASE CARBOXYL TRANSFERASE SUBUNIT ALPHA"/>
    <property type="match status" value="1"/>
</dbReference>
<dbReference type="PANTHER" id="PTHR42853:SF3">
    <property type="entry name" value="ACETYL-COENZYME A CARBOXYLASE CARBOXYL TRANSFERASE SUBUNIT ALPHA, CHLOROPLASTIC"/>
    <property type="match status" value="1"/>
</dbReference>
<dbReference type="Pfam" id="PF03255">
    <property type="entry name" value="ACCA"/>
    <property type="match status" value="1"/>
</dbReference>
<dbReference type="PRINTS" id="PR01069">
    <property type="entry name" value="ACCCTRFRASEA"/>
</dbReference>
<dbReference type="SUPFAM" id="SSF52096">
    <property type="entry name" value="ClpP/crotonase"/>
    <property type="match status" value="1"/>
</dbReference>
<dbReference type="PROSITE" id="PS50989">
    <property type="entry name" value="COA_CT_CTER"/>
    <property type="match status" value="1"/>
</dbReference>